<accession>B0S1E4</accession>
<keyword id="KW-0963">Cytoplasm</keyword>
<keyword id="KW-1185">Reference proteome</keyword>
<keyword id="KW-0690">Ribosome biogenesis</keyword>
<sequence>MNIKRVRRISSEIKKVISSSIINSLKDPRIDKLNVSVTEVKVTNDLSFATVYIAVIGDDEKKKQTLEGLNKAKGFLKKQIGENVDLRHVPQLIFKIDETSEQSMHIENLIKSIHEENHNEN</sequence>
<protein>
    <recommendedName>
        <fullName evidence="1">Ribosome-binding factor A</fullName>
    </recommendedName>
</protein>
<comment type="function">
    <text evidence="1">One of several proteins that assist in the late maturation steps of the functional core of the 30S ribosomal subunit. Associates with free 30S ribosomal subunits (but not with 30S subunits that are part of 70S ribosomes or polysomes). Required for efficient processing of 16S rRNA. May interact with the 5'-terminal helix region of 16S rRNA.</text>
</comment>
<comment type="subunit">
    <text evidence="1">Monomer. Binds 30S ribosomal subunits, but not 50S ribosomal subunits or 70S ribosomes.</text>
</comment>
<comment type="subcellular location">
    <subcellularLocation>
        <location evidence="1">Cytoplasm</location>
    </subcellularLocation>
</comment>
<comment type="similarity">
    <text evidence="1">Belongs to the RbfA family.</text>
</comment>
<reference key="1">
    <citation type="journal article" date="2008" name="DNA Res.">
        <title>Complete genome sequence of Finegoldia magna, an anaerobic opportunistic pathogen.</title>
        <authorList>
            <person name="Goto T."/>
            <person name="Yamashita A."/>
            <person name="Hirakawa H."/>
            <person name="Matsutani M."/>
            <person name="Todo K."/>
            <person name="Ohshima K."/>
            <person name="Toh H."/>
            <person name="Miyamoto K."/>
            <person name="Kuhara S."/>
            <person name="Hattori M."/>
            <person name="Shimizu T."/>
            <person name="Akimoto S."/>
        </authorList>
    </citation>
    <scope>NUCLEOTIDE SEQUENCE [LARGE SCALE GENOMIC DNA]</scope>
    <source>
        <strain>ATCC 29328 / DSM 20472 / WAL 2508</strain>
    </source>
</reference>
<name>RBFA_FINM2</name>
<dbReference type="EMBL" id="AP008971">
    <property type="protein sequence ID" value="BAG08184.1"/>
    <property type="molecule type" value="Genomic_DNA"/>
</dbReference>
<dbReference type="RefSeq" id="WP_002838269.1">
    <property type="nucleotide sequence ID" value="NC_010376.1"/>
</dbReference>
<dbReference type="SMR" id="B0S1E4"/>
<dbReference type="STRING" id="334413.FMG_0766"/>
<dbReference type="KEGG" id="fma:FMG_0766"/>
<dbReference type="eggNOG" id="COG0858">
    <property type="taxonomic scope" value="Bacteria"/>
</dbReference>
<dbReference type="HOGENOM" id="CLU_089475_6_3_9"/>
<dbReference type="Proteomes" id="UP000001319">
    <property type="component" value="Chromosome"/>
</dbReference>
<dbReference type="GO" id="GO:0005829">
    <property type="term" value="C:cytosol"/>
    <property type="evidence" value="ECO:0007669"/>
    <property type="project" value="TreeGrafter"/>
</dbReference>
<dbReference type="GO" id="GO:0043024">
    <property type="term" value="F:ribosomal small subunit binding"/>
    <property type="evidence" value="ECO:0007669"/>
    <property type="project" value="TreeGrafter"/>
</dbReference>
<dbReference type="GO" id="GO:0030490">
    <property type="term" value="P:maturation of SSU-rRNA"/>
    <property type="evidence" value="ECO:0007669"/>
    <property type="project" value="UniProtKB-UniRule"/>
</dbReference>
<dbReference type="Gene3D" id="3.30.300.20">
    <property type="match status" value="1"/>
</dbReference>
<dbReference type="HAMAP" id="MF_00003">
    <property type="entry name" value="RbfA"/>
    <property type="match status" value="1"/>
</dbReference>
<dbReference type="InterPro" id="IPR015946">
    <property type="entry name" value="KH_dom-like_a/b"/>
</dbReference>
<dbReference type="InterPro" id="IPR000238">
    <property type="entry name" value="RbfA"/>
</dbReference>
<dbReference type="InterPro" id="IPR023799">
    <property type="entry name" value="RbfA_dom_sf"/>
</dbReference>
<dbReference type="InterPro" id="IPR020053">
    <property type="entry name" value="Ribosome-bd_factorA_CS"/>
</dbReference>
<dbReference type="NCBIfam" id="TIGR00082">
    <property type="entry name" value="rbfA"/>
    <property type="match status" value="1"/>
</dbReference>
<dbReference type="PANTHER" id="PTHR33515">
    <property type="entry name" value="RIBOSOME-BINDING FACTOR A, CHLOROPLASTIC-RELATED"/>
    <property type="match status" value="1"/>
</dbReference>
<dbReference type="PANTHER" id="PTHR33515:SF1">
    <property type="entry name" value="RIBOSOME-BINDING FACTOR A, CHLOROPLASTIC-RELATED"/>
    <property type="match status" value="1"/>
</dbReference>
<dbReference type="Pfam" id="PF02033">
    <property type="entry name" value="RBFA"/>
    <property type="match status" value="1"/>
</dbReference>
<dbReference type="SUPFAM" id="SSF89919">
    <property type="entry name" value="Ribosome-binding factor A, RbfA"/>
    <property type="match status" value="1"/>
</dbReference>
<dbReference type="PROSITE" id="PS01319">
    <property type="entry name" value="RBFA"/>
    <property type="match status" value="1"/>
</dbReference>
<gene>
    <name evidence="1" type="primary">rbfA</name>
    <name type="ordered locus">FMG_0766</name>
</gene>
<proteinExistence type="inferred from homology"/>
<evidence type="ECO:0000255" key="1">
    <source>
        <dbReference type="HAMAP-Rule" id="MF_00003"/>
    </source>
</evidence>
<feature type="chain" id="PRO_1000201632" description="Ribosome-binding factor A">
    <location>
        <begin position="1"/>
        <end position="121"/>
    </location>
</feature>
<organism>
    <name type="scientific">Finegoldia magna (strain ATCC 29328 / DSM 20472 / WAL 2508)</name>
    <name type="common">Peptostreptococcus magnus</name>
    <dbReference type="NCBI Taxonomy" id="334413"/>
    <lineage>
        <taxon>Bacteria</taxon>
        <taxon>Bacillati</taxon>
        <taxon>Bacillota</taxon>
        <taxon>Tissierellia</taxon>
        <taxon>Tissierellales</taxon>
        <taxon>Peptoniphilaceae</taxon>
        <taxon>Finegoldia</taxon>
    </lineage>
</organism>